<reference key="1">
    <citation type="submission" date="2007-08" db="EMBL/GenBank/DDBJ databases">
        <authorList>
            <consortium name="The Citrobacter koseri Genome Sequencing Project"/>
            <person name="McClelland M."/>
            <person name="Sanderson E.K."/>
            <person name="Porwollik S."/>
            <person name="Spieth J."/>
            <person name="Clifton W.S."/>
            <person name="Latreille P."/>
            <person name="Courtney L."/>
            <person name="Wang C."/>
            <person name="Pepin K."/>
            <person name="Bhonagiri V."/>
            <person name="Nash W."/>
            <person name="Johnson M."/>
            <person name="Thiruvilangam P."/>
            <person name="Wilson R."/>
        </authorList>
    </citation>
    <scope>NUCLEOTIDE SEQUENCE [LARGE SCALE GENOMIC DNA]</scope>
    <source>
        <strain>ATCC BAA-895 / CDC 4225-83 / SGSC4696</strain>
    </source>
</reference>
<gene>
    <name evidence="1" type="primary">nagB</name>
    <name type="ordered locus">CKO_02486</name>
</gene>
<proteinExistence type="inferred from homology"/>
<feature type="chain" id="PRO_1000066966" description="Glucosamine-6-phosphate deaminase">
    <location>
        <begin position="1"/>
        <end position="266"/>
    </location>
</feature>
<feature type="active site" description="Proton acceptor; for enolization step" evidence="1">
    <location>
        <position position="72"/>
    </location>
</feature>
<feature type="active site" description="For ring-opening step" evidence="1">
    <location>
        <position position="141"/>
    </location>
</feature>
<feature type="active site" description="Proton acceptor; for ring-opening step" evidence="1">
    <location>
        <position position="143"/>
    </location>
</feature>
<feature type="active site" description="For ring-opening step" evidence="1">
    <location>
        <position position="148"/>
    </location>
</feature>
<feature type="site" description="Part of the allosteric site" evidence="1">
    <location>
        <position position="151"/>
    </location>
</feature>
<feature type="site" description="Part of the allosteric site" evidence="1">
    <location>
        <position position="158"/>
    </location>
</feature>
<feature type="site" description="Part of the allosteric site" evidence="1">
    <location>
        <position position="160"/>
    </location>
</feature>
<feature type="site" description="Part of the allosteric site" evidence="1">
    <location>
        <position position="161"/>
    </location>
</feature>
<feature type="site" description="Part of the allosteric site" evidence="1">
    <location>
        <position position="254"/>
    </location>
</feature>
<protein>
    <recommendedName>
        <fullName evidence="1">Glucosamine-6-phosphate deaminase</fullName>
        <ecNumber evidence="1">3.5.99.6</ecNumber>
    </recommendedName>
    <alternativeName>
        <fullName evidence="1">GlcN6P deaminase</fullName>
        <shortName evidence="1">GNPDA</shortName>
    </alternativeName>
    <alternativeName>
        <fullName evidence="1">Glucosamine-6-phosphate isomerase</fullName>
    </alternativeName>
</protein>
<evidence type="ECO:0000255" key="1">
    <source>
        <dbReference type="HAMAP-Rule" id="MF_01241"/>
    </source>
</evidence>
<keyword id="KW-0021">Allosteric enzyme</keyword>
<keyword id="KW-0119">Carbohydrate metabolism</keyword>
<keyword id="KW-0378">Hydrolase</keyword>
<keyword id="KW-1185">Reference proteome</keyword>
<accession>A8AJE0</accession>
<comment type="function">
    <text evidence="1">Catalyzes the reversible isomerization-deamination of glucosamine 6-phosphate (GlcN6P) to form fructose 6-phosphate (Fru6P) and ammonium ion.</text>
</comment>
<comment type="catalytic activity">
    <reaction evidence="1">
        <text>alpha-D-glucosamine 6-phosphate + H2O = beta-D-fructose 6-phosphate + NH4(+)</text>
        <dbReference type="Rhea" id="RHEA:12172"/>
        <dbReference type="ChEBI" id="CHEBI:15377"/>
        <dbReference type="ChEBI" id="CHEBI:28938"/>
        <dbReference type="ChEBI" id="CHEBI:57634"/>
        <dbReference type="ChEBI" id="CHEBI:75989"/>
        <dbReference type="EC" id="3.5.99.6"/>
    </reaction>
</comment>
<comment type="activity regulation">
    <text evidence="1">Allosterically activated by N-acetylglucosamine 6-phosphate (GlcNAc6P).</text>
</comment>
<comment type="pathway">
    <text evidence="1">Amino-sugar metabolism; N-acetylneuraminate degradation; D-fructose 6-phosphate from N-acetylneuraminate: step 5/5.</text>
</comment>
<comment type="subunit">
    <text evidence="1">Homohexamer.</text>
</comment>
<comment type="similarity">
    <text evidence="1">Belongs to the glucosamine/galactosamine-6-phosphate isomerase family. NagB subfamily.</text>
</comment>
<name>NAGB_CITK8</name>
<organism>
    <name type="scientific">Citrobacter koseri (strain ATCC BAA-895 / CDC 4225-83 / SGSC4696)</name>
    <dbReference type="NCBI Taxonomy" id="290338"/>
    <lineage>
        <taxon>Bacteria</taxon>
        <taxon>Pseudomonadati</taxon>
        <taxon>Pseudomonadota</taxon>
        <taxon>Gammaproteobacteria</taxon>
        <taxon>Enterobacterales</taxon>
        <taxon>Enterobacteriaceae</taxon>
        <taxon>Citrobacter</taxon>
    </lineage>
</organism>
<sequence length="266" mass="29617">MRLIPLTSAEQVGKWAARHIVNRINAFKPTADRPFVLGLPTGGTPLTAYKALVEMHKAGQVSFKHVVTFNMDEYVGLPKEHPESYHSFMHRNFFDHVDIPAENINLLNGNAPDIDAECRNYEEKIRSYGKIHLFMGGVGNDGHIAFNEPASSLASRTRIKTLTHDTRVANSRFFDGDVNQVPKYALTVGVGTLLDAEEVMILVLGHQKAQALQAAVEGNVNHMWTISCLQLHPKAVVVCDEPSTMELKVKTLKYFNELEAENIKGL</sequence>
<dbReference type="EC" id="3.5.99.6" evidence="1"/>
<dbReference type="EMBL" id="CP000822">
    <property type="protein sequence ID" value="ABV13603.1"/>
    <property type="molecule type" value="Genomic_DNA"/>
</dbReference>
<dbReference type="RefSeq" id="WP_012133326.1">
    <property type="nucleotide sequence ID" value="NC_009792.1"/>
</dbReference>
<dbReference type="SMR" id="A8AJE0"/>
<dbReference type="STRING" id="290338.CKO_02486"/>
<dbReference type="GeneID" id="45136367"/>
<dbReference type="KEGG" id="cko:CKO_02486"/>
<dbReference type="HOGENOM" id="CLU_049611_0_1_6"/>
<dbReference type="OrthoDB" id="9791139at2"/>
<dbReference type="UniPathway" id="UPA00629">
    <property type="reaction ID" value="UER00684"/>
</dbReference>
<dbReference type="Proteomes" id="UP000008148">
    <property type="component" value="Chromosome"/>
</dbReference>
<dbReference type="GO" id="GO:0005737">
    <property type="term" value="C:cytoplasm"/>
    <property type="evidence" value="ECO:0007669"/>
    <property type="project" value="TreeGrafter"/>
</dbReference>
<dbReference type="GO" id="GO:0004342">
    <property type="term" value="F:glucosamine-6-phosphate deaminase activity"/>
    <property type="evidence" value="ECO:0007669"/>
    <property type="project" value="UniProtKB-UniRule"/>
</dbReference>
<dbReference type="GO" id="GO:0042802">
    <property type="term" value="F:identical protein binding"/>
    <property type="evidence" value="ECO:0007669"/>
    <property type="project" value="TreeGrafter"/>
</dbReference>
<dbReference type="GO" id="GO:0005975">
    <property type="term" value="P:carbohydrate metabolic process"/>
    <property type="evidence" value="ECO:0007669"/>
    <property type="project" value="InterPro"/>
</dbReference>
<dbReference type="GO" id="GO:0006043">
    <property type="term" value="P:glucosamine catabolic process"/>
    <property type="evidence" value="ECO:0007669"/>
    <property type="project" value="TreeGrafter"/>
</dbReference>
<dbReference type="GO" id="GO:0006046">
    <property type="term" value="P:N-acetylglucosamine catabolic process"/>
    <property type="evidence" value="ECO:0007669"/>
    <property type="project" value="TreeGrafter"/>
</dbReference>
<dbReference type="GO" id="GO:0019262">
    <property type="term" value="P:N-acetylneuraminate catabolic process"/>
    <property type="evidence" value="ECO:0007669"/>
    <property type="project" value="UniProtKB-UniRule"/>
</dbReference>
<dbReference type="CDD" id="cd01399">
    <property type="entry name" value="GlcN6P_deaminase"/>
    <property type="match status" value="1"/>
</dbReference>
<dbReference type="FunFam" id="3.40.50.1360:FF:000002">
    <property type="entry name" value="Glucosamine-6-phosphate deaminase"/>
    <property type="match status" value="1"/>
</dbReference>
<dbReference type="Gene3D" id="3.40.50.1360">
    <property type="match status" value="1"/>
</dbReference>
<dbReference type="HAMAP" id="MF_01241">
    <property type="entry name" value="GlcN6P_deamin"/>
    <property type="match status" value="1"/>
</dbReference>
<dbReference type="InterPro" id="IPR006148">
    <property type="entry name" value="Glc/Gal-6P_isomerase"/>
</dbReference>
<dbReference type="InterPro" id="IPR004547">
    <property type="entry name" value="Glucosamine6P_isomerase"/>
</dbReference>
<dbReference type="InterPro" id="IPR018321">
    <property type="entry name" value="Glucosamine6P_isomerase_CS"/>
</dbReference>
<dbReference type="InterPro" id="IPR037171">
    <property type="entry name" value="NagB/RpiA_transferase-like"/>
</dbReference>
<dbReference type="NCBIfam" id="TIGR00502">
    <property type="entry name" value="nagB"/>
    <property type="match status" value="1"/>
</dbReference>
<dbReference type="NCBIfam" id="NF001685">
    <property type="entry name" value="PRK00443.1-5"/>
    <property type="match status" value="1"/>
</dbReference>
<dbReference type="PANTHER" id="PTHR11280">
    <property type="entry name" value="GLUCOSAMINE-6-PHOSPHATE ISOMERASE"/>
    <property type="match status" value="1"/>
</dbReference>
<dbReference type="PANTHER" id="PTHR11280:SF5">
    <property type="entry name" value="GLUCOSAMINE-6-PHOSPHATE ISOMERASE"/>
    <property type="match status" value="1"/>
</dbReference>
<dbReference type="Pfam" id="PF01182">
    <property type="entry name" value="Glucosamine_iso"/>
    <property type="match status" value="1"/>
</dbReference>
<dbReference type="SUPFAM" id="SSF100950">
    <property type="entry name" value="NagB/RpiA/CoA transferase-like"/>
    <property type="match status" value="1"/>
</dbReference>
<dbReference type="PROSITE" id="PS01161">
    <property type="entry name" value="GLC_GALNAC_ISOMERASE"/>
    <property type="match status" value="1"/>
</dbReference>